<protein>
    <recommendedName>
        <fullName>Glutathione S-transferase class-mu 26 kDa isozyme</fullName>
        <shortName>GST 26</shortName>
        <ecNumber>2.5.1.18</ecNumber>
    </recommendedName>
    <alternativeName>
        <fullName>Sm26/1 antigen</fullName>
    </alternativeName>
    <alternativeName>
        <fullName>SmGST</fullName>
    </alternativeName>
</protein>
<accession>P15964</accession>
<feature type="chain" id="PRO_0000185806" description="Glutathione S-transferase class-mu 26 kDa isozyme">
    <location>
        <begin position="1"/>
        <end position="218"/>
    </location>
</feature>
<feature type="domain" description="GST N-terminal">
    <location>
        <begin position="1"/>
        <end position="83"/>
    </location>
</feature>
<feature type="domain" description="GST C-terminal">
    <location>
        <begin position="85"/>
        <end position="203"/>
    </location>
</feature>
<feature type="binding site" evidence="2">
    <location>
        <begin position="7"/>
        <end position="8"/>
    </location>
    <ligand>
        <name>glutathione</name>
        <dbReference type="ChEBI" id="CHEBI:57925"/>
    </ligand>
</feature>
<feature type="binding site" evidence="2">
    <location>
        <begin position="41"/>
        <end position="45"/>
    </location>
    <ligand>
        <name>glutathione</name>
        <dbReference type="ChEBI" id="CHEBI:57925"/>
    </ligand>
</feature>
<feature type="binding site" evidence="2">
    <location>
        <begin position="54"/>
        <end position="55"/>
    </location>
    <ligand>
        <name>glutathione</name>
        <dbReference type="ChEBI" id="CHEBI:57925"/>
    </ligand>
</feature>
<feature type="binding site" evidence="2">
    <location>
        <begin position="67"/>
        <end position="68"/>
    </location>
    <ligand>
        <name>glutathione</name>
        <dbReference type="ChEBI" id="CHEBI:57925"/>
    </ligand>
</feature>
<feature type="binding site" evidence="1">
    <location>
        <position position="111"/>
    </location>
    <ligand>
        <name>substrate</name>
    </ligand>
</feature>
<name>GST26_SCHMA</name>
<keyword id="KW-1185">Reference proteome</keyword>
<keyword id="KW-0808">Transferase</keyword>
<proteinExistence type="evidence at transcript level"/>
<organism>
    <name type="scientific">Schistosoma mansoni</name>
    <name type="common">Blood fluke</name>
    <dbReference type="NCBI Taxonomy" id="6183"/>
    <lineage>
        <taxon>Eukaryota</taxon>
        <taxon>Metazoa</taxon>
        <taxon>Spiralia</taxon>
        <taxon>Lophotrochozoa</taxon>
        <taxon>Platyhelminthes</taxon>
        <taxon>Trematoda</taxon>
        <taxon>Digenea</taxon>
        <taxon>Strigeidida</taxon>
        <taxon>Schistosomatoidea</taxon>
        <taxon>Schistosomatidae</taxon>
        <taxon>Schistosoma</taxon>
    </lineage>
</organism>
<comment type="function">
    <text>Conjugation of reduced glutathione to a wide number of exogenous and endogenous hydrophobic electrophiles.</text>
</comment>
<comment type="function">
    <text>GST isoenzymes appear to play a central role in the parasite detoxification system. Other functions are also suspected including a role in increasing the solubility of haematin in the parasite gut.</text>
</comment>
<comment type="catalytic activity">
    <reaction>
        <text>RX + glutathione = an S-substituted glutathione + a halide anion + H(+)</text>
        <dbReference type="Rhea" id="RHEA:16437"/>
        <dbReference type="ChEBI" id="CHEBI:15378"/>
        <dbReference type="ChEBI" id="CHEBI:16042"/>
        <dbReference type="ChEBI" id="CHEBI:17792"/>
        <dbReference type="ChEBI" id="CHEBI:57925"/>
        <dbReference type="ChEBI" id="CHEBI:90779"/>
        <dbReference type="EC" id="2.5.1.18"/>
    </reaction>
</comment>
<comment type="subunit">
    <text>Homodimer.</text>
</comment>
<comment type="tissue specificity">
    <text>Tegument and in subtegumentary parenchymal cells. GST 26 may be actively excreted by adult worms.</text>
</comment>
<comment type="miscellaneous">
    <text>There are at least three isoenzymes of GST in S.mansoni.</text>
</comment>
<comment type="similarity">
    <text evidence="3">Belongs to the GST superfamily. Mu family.</text>
</comment>
<reference key="1">
    <citation type="journal article" date="1990" name="Mol. Biochem. Parasitol.">
        <title>Molecular cloning and tissue distribution of a 26-kilodalton Schistosoma mansoni glutathione S-transferase.</title>
        <authorList>
            <person name="Trottein F."/>
            <person name="Kieny M.P."/>
            <person name="Verwaerde C."/>
            <person name="Torpier G."/>
            <person name="Pierce R.J."/>
            <person name="Balloul J.-M."/>
            <person name="Schmitt D."/>
            <person name="Lecocq J.-P."/>
            <person name="Capron A."/>
        </authorList>
    </citation>
    <scope>NUCLEOTIDE SEQUENCE [MRNA]</scope>
    <source>
        <strain>Puerto Rican</strain>
    </source>
</reference>
<reference key="2">
    <citation type="journal article" date="1990" name="Mol. Biochem. Parasitol.">
        <title>Comparison of the cloned genes of the 26- and 28-kilodalton glutathione S-transferases of Schistosoma japonicum and Schistosoma mansoni.</title>
        <authorList>
            <person name="Henkle K.J."/>
            <person name="Davern K.M."/>
            <person name="Wright M.D."/>
            <person name="Ramos A.J."/>
            <person name="Mitchell G.F."/>
        </authorList>
    </citation>
    <scope>NUCLEOTIDE SEQUENCE [MRNA] OF 8-218</scope>
    <source>
        <strain>Puerto Rican</strain>
    </source>
</reference>
<evidence type="ECO:0000250" key="1"/>
<evidence type="ECO:0000250" key="2">
    <source>
        <dbReference type="UniProtKB" id="P08515"/>
    </source>
</evidence>
<evidence type="ECO:0000305" key="3"/>
<dbReference type="EC" id="2.5.1.18"/>
<dbReference type="EMBL" id="M31106">
    <property type="protein sequence ID" value="AAA29888.1"/>
    <property type="molecule type" value="mRNA"/>
</dbReference>
<dbReference type="EMBL" id="M26913">
    <property type="protein sequence ID" value="AAA29889.1"/>
    <property type="molecule type" value="mRNA"/>
</dbReference>
<dbReference type="PIR" id="A45523">
    <property type="entry name" value="A45523"/>
</dbReference>
<dbReference type="SMR" id="P15964"/>
<dbReference type="STRING" id="6183.P15964"/>
<dbReference type="eggNOG" id="KOG1695">
    <property type="taxonomic scope" value="Eukaryota"/>
</dbReference>
<dbReference type="HOGENOM" id="CLU_039475_2_0_1"/>
<dbReference type="InParanoid" id="P15964"/>
<dbReference type="BRENDA" id="2.5.1.18">
    <property type="organism ID" value="5608"/>
</dbReference>
<dbReference type="Proteomes" id="UP000008854">
    <property type="component" value="Unassembled WGS sequence"/>
</dbReference>
<dbReference type="GO" id="GO:0004364">
    <property type="term" value="F:glutathione transferase activity"/>
    <property type="evidence" value="ECO:0007669"/>
    <property type="project" value="UniProtKB-EC"/>
</dbReference>
<dbReference type="GO" id="GO:0006749">
    <property type="term" value="P:glutathione metabolic process"/>
    <property type="evidence" value="ECO:0007669"/>
    <property type="project" value="TreeGrafter"/>
</dbReference>
<dbReference type="CDD" id="cd03075">
    <property type="entry name" value="GST_N_Mu"/>
    <property type="match status" value="1"/>
</dbReference>
<dbReference type="FunFam" id="1.20.1050.10:FF:000003">
    <property type="entry name" value="Glutathione S-transferase 2"/>
    <property type="match status" value="1"/>
</dbReference>
<dbReference type="Gene3D" id="1.20.1050.130">
    <property type="match status" value="1"/>
</dbReference>
<dbReference type="InterPro" id="IPR010987">
    <property type="entry name" value="Glutathione-S-Trfase_C-like"/>
</dbReference>
<dbReference type="InterPro" id="IPR036282">
    <property type="entry name" value="Glutathione-S-Trfase_C_sf"/>
</dbReference>
<dbReference type="InterPro" id="IPR040079">
    <property type="entry name" value="Glutathione_S-Trfase"/>
</dbReference>
<dbReference type="InterPro" id="IPR004045">
    <property type="entry name" value="Glutathione_S-Trfase_N"/>
</dbReference>
<dbReference type="InterPro" id="IPR004046">
    <property type="entry name" value="GST_C"/>
</dbReference>
<dbReference type="InterPro" id="IPR050213">
    <property type="entry name" value="GST_superfamily"/>
</dbReference>
<dbReference type="InterPro" id="IPR036249">
    <property type="entry name" value="Thioredoxin-like_sf"/>
</dbReference>
<dbReference type="PANTHER" id="PTHR11571">
    <property type="entry name" value="GLUTATHIONE S-TRANSFERASE"/>
    <property type="match status" value="1"/>
</dbReference>
<dbReference type="PANTHER" id="PTHR11571:SF222">
    <property type="entry name" value="GLUTATHIONE TRANSFERASE"/>
    <property type="match status" value="1"/>
</dbReference>
<dbReference type="Pfam" id="PF14497">
    <property type="entry name" value="GST_C_3"/>
    <property type="match status" value="1"/>
</dbReference>
<dbReference type="Pfam" id="PF02798">
    <property type="entry name" value="GST_N"/>
    <property type="match status" value="1"/>
</dbReference>
<dbReference type="SFLD" id="SFLDG01205">
    <property type="entry name" value="AMPS.1"/>
    <property type="match status" value="1"/>
</dbReference>
<dbReference type="SFLD" id="SFLDS00019">
    <property type="entry name" value="Glutathione_Transferase_(cytos"/>
    <property type="match status" value="1"/>
</dbReference>
<dbReference type="SUPFAM" id="SSF47616">
    <property type="entry name" value="GST C-terminal domain-like"/>
    <property type="match status" value="1"/>
</dbReference>
<dbReference type="SUPFAM" id="SSF52833">
    <property type="entry name" value="Thioredoxin-like"/>
    <property type="match status" value="1"/>
</dbReference>
<dbReference type="PROSITE" id="PS50405">
    <property type="entry name" value="GST_CTER"/>
    <property type="match status" value="1"/>
</dbReference>
<dbReference type="PROSITE" id="PS50404">
    <property type="entry name" value="GST_NTER"/>
    <property type="match status" value="1"/>
</dbReference>
<sequence>MAPKFGYWKVKGLVQPTRLLLEHLEETYEERAYDRNEIDAWSNDKFKLGLEFPNLPYYIDGDFKLTQSMAIIRYIADKHNMLGACPKERAEISMLEGAVLDIRMGVLRIAYNKEYETLKVDFLNKLPGRLKMFEDRLSNKTYLNGNCVTHPDFMLYDALDVVLYMDSQCLNEFPKLVSFKKCIEDLPQIKNYLNSSRYIKWPLQGWDATFGGGDTPPK</sequence>